<keyword id="KW-0418">Kinase</keyword>
<keyword id="KW-0547">Nucleotide-binding</keyword>
<keyword id="KW-0723">Serine/threonine-protein kinase</keyword>
<keyword id="KW-0808">Transferase</keyword>
<feature type="chain" id="PRO_1000136503" description="Putative pyruvate, phosphate dikinase regulatory protein">
    <location>
        <begin position="1"/>
        <end position="272"/>
    </location>
</feature>
<feature type="binding site" evidence="1">
    <location>
        <begin position="154"/>
        <end position="161"/>
    </location>
    <ligand>
        <name>ADP</name>
        <dbReference type="ChEBI" id="CHEBI:456216"/>
    </ligand>
</feature>
<name>PDRP_WOLPP</name>
<sequence>MTLKKLNLHLVSDSSGETVISVAKSALKHFRSVETIEYVWSFVKGEEQIDKILEEIERKSDEHNFVICTITDDGLRKYLKDNCIKLKIPYRAILSHIIREISSYLEIEKDEKLDLYTEINNEYFQRIEAINYTINHDDGQNIQDIDKADIILVGVSRTSKSPTSMYLAYRGYKVANVPFVSEIPFYVDLAKLRNKLTIGVTIDVRRLIEIRKNRLTSINNEGNNIYADPRKVEEEIKEAEEFFKQNNWPIIDVTQRSIEEVSATIIQYFNKI</sequence>
<protein>
    <recommendedName>
        <fullName evidence="1">Putative pyruvate, phosphate dikinase regulatory protein</fullName>
        <shortName evidence="1">PPDK regulatory protein</shortName>
        <ecNumber evidence="1">2.7.11.32</ecNumber>
        <ecNumber evidence="1">2.7.4.27</ecNumber>
    </recommendedName>
</protein>
<comment type="function">
    <text evidence="1">Bifunctional serine/threonine kinase and phosphorylase involved in the regulation of the pyruvate, phosphate dikinase (PPDK) by catalyzing its phosphorylation/dephosphorylation.</text>
</comment>
<comment type="catalytic activity">
    <reaction evidence="1">
        <text>N(tele)-phospho-L-histidyl/L-threonyl-[pyruvate, phosphate dikinase] + ADP = N(tele)-phospho-L-histidyl/O-phospho-L-threonyl-[pyruvate, phosphate dikinase] + AMP + H(+)</text>
        <dbReference type="Rhea" id="RHEA:43692"/>
        <dbReference type="Rhea" id="RHEA-COMP:10650"/>
        <dbReference type="Rhea" id="RHEA-COMP:10651"/>
        <dbReference type="ChEBI" id="CHEBI:15378"/>
        <dbReference type="ChEBI" id="CHEBI:30013"/>
        <dbReference type="ChEBI" id="CHEBI:61977"/>
        <dbReference type="ChEBI" id="CHEBI:83586"/>
        <dbReference type="ChEBI" id="CHEBI:456215"/>
        <dbReference type="ChEBI" id="CHEBI:456216"/>
        <dbReference type="EC" id="2.7.11.32"/>
    </reaction>
</comment>
<comment type="catalytic activity">
    <reaction evidence="1">
        <text>N(tele)-phospho-L-histidyl/O-phospho-L-threonyl-[pyruvate, phosphate dikinase] + phosphate + H(+) = N(tele)-phospho-L-histidyl/L-threonyl-[pyruvate, phosphate dikinase] + diphosphate</text>
        <dbReference type="Rhea" id="RHEA:43696"/>
        <dbReference type="Rhea" id="RHEA-COMP:10650"/>
        <dbReference type="Rhea" id="RHEA-COMP:10651"/>
        <dbReference type="ChEBI" id="CHEBI:15378"/>
        <dbReference type="ChEBI" id="CHEBI:30013"/>
        <dbReference type="ChEBI" id="CHEBI:33019"/>
        <dbReference type="ChEBI" id="CHEBI:43474"/>
        <dbReference type="ChEBI" id="CHEBI:61977"/>
        <dbReference type="ChEBI" id="CHEBI:83586"/>
        <dbReference type="EC" id="2.7.4.27"/>
    </reaction>
</comment>
<comment type="similarity">
    <text evidence="1">Belongs to the pyruvate, phosphate/water dikinase regulatory protein family. PDRP subfamily.</text>
</comment>
<proteinExistence type="inferred from homology"/>
<organism>
    <name type="scientific">Wolbachia pipientis subsp. Culex pipiens (strain wPip)</name>
    <dbReference type="NCBI Taxonomy" id="570417"/>
    <lineage>
        <taxon>Bacteria</taxon>
        <taxon>Pseudomonadati</taxon>
        <taxon>Pseudomonadota</taxon>
        <taxon>Alphaproteobacteria</taxon>
        <taxon>Rickettsiales</taxon>
        <taxon>Anaplasmataceae</taxon>
        <taxon>Wolbachieae</taxon>
        <taxon>Wolbachia</taxon>
    </lineage>
</organism>
<dbReference type="EC" id="2.7.11.32" evidence="1"/>
<dbReference type="EC" id="2.7.4.27" evidence="1"/>
<dbReference type="EMBL" id="AM999887">
    <property type="protein sequence ID" value="CAQ54594.1"/>
    <property type="molecule type" value="Genomic_DNA"/>
</dbReference>
<dbReference type="RefSeq" id="WP_007301927.1">
    <property type="nucleotide sequence ID" value="NC_010981.1"/>
</dbReference>
<dbReference type="SMR" id="B3CPU1"/>
<dbReference type="KEGG" id="wpi:WP0486"/>
<dbReference type="eggNOG" id="COG1806">
    <property type="taxonomic scope" value="Bacteria"/>
</dbReference>
<dbReference type="HOGENOM" id="CLU_046206_2_0_5"/>
<dbReference type="Proteomes" id="UP000008814">
    <property type="component" value="Chromosome"/>
</dbReference>
<dbReference type="GO" id="GO:0043531">
    <property type="term" value="F:ADP binding"/>
    <property type="evidence" value="ECO:0007669"/>
    <property type="project" value="UniProtKB-UniRule"/>
</dbReference>
<dbReference type="GO" id="GO:0005524">
    <property type="term" value="F:ATP binding"/>
    <property type="evidence" value="ECO:0007669"/>
    <property type="project" value="InterPro"/>
</dbReference>
<dbReference type="GO" id="GO:0016776">
    <property type="term" value="F:phosphotransferase activity, phosphate group as acceptor"/>
    <property type="evidence" value="ECO:0007669"/>
    <property type="project" value="UniProtKB-UniRule"/>
</dbReference>
<dbReference type="GO" id="GO:0004674">
    <property type="term" value="F:protein serine/threonine kinase activity"/>
    <property type="evidence" value="ECO:0007669"/>
    <property type="project" value="UniProtKB-UniRule"/>
</dbReference>
<dbReference type="HAMAP" id="MF_00921">
    <property type="entry name" value="PDRP"/>
    <property type="match status" value="1"/>
</dbReference>
<dbReference type="InterPro" id="IPR005177">
    <property type="entry name" value="Kinase-pyrophosphorylase"/>
</dbReference>
<dbReference type="InterPro" id="IPR026565">
    <property type="entry name" value="PPDK_reg"/>
</dbReference>
<dbReference type="NCBIfam" id="NF003742">
    <property type="entry name" value="PRK05339.1"/>
    <property type="match status" value="1"/>
</dbReference>
<dbReference type="PANTHER" id="PTHR31756">
    <property type="entry name" value="PYRUVATE, PHOSPHATE DIKINASE REGULATORY PROTEIN 1, CHLOROPLASTIC"/>
    <property type="match status" value="1"/>
</dbReference>
<dbReference type="PANTHER" id="PTHR31756:SF3">
    <property type="entry name" value="PYRUVATE, PHOSPHATE DIKINASE REGULATORY PROTEIN 1, CHLOROPLASTIC"/>
    <property type="match status" value="1"/>
</dbReference>
<dbReference type="Pfam" id="PF03618">
    <property type="entry name" value="Kinase-PPPase"/>
    <property type="match status" value="1"/>
</dbReference>
<gene>
    <name type="ordered locus">WP0486</name>
</gene>
<reference key="1">
    <citation type="journal article" date="2008" name="Mol. Biol. Evol.">
        <title>Genome evolution of Wolbachia strain wPip from the Culex pipiens group.</title>
        <authorList>
            <person name="Klasson L."/>
            <person name="Walker T."/>
            <person name="Sebaihia M."/>
            <person name="Sanders M.J."/>
            <person name="Quail M.A."/>
            <person name="Lord A."/>
            <person name="Sanders S."/>
            <person name="Earl J."/>
            <person name="O'Neill S.L."/>
            <person name="Thomson N."/>
            <person name="Sinkins S.P."/>
            <person name="Parkhill J."/>
        </authorList>
    </citation>
    <scope>NUCLEOTIDE SEQUENCE [LARGE SCALE GENOMIC DNA]</scope>
    <source>
        <strain>wPip</strain>
    </source>
</reference>
<accession>B3CPU1</accession>
<evidence type="ECO:0000255" key="1">
    <source>
        <dbReference type="HAMAP-Rule" id="MF_00921"/>
    </source>
</evidence>